<accession>Q4L3H5</accession>
<sequence length="496" mass="57065">MSEEMNDQMQVRRQKLQELIDLGIDPFGKRFERSATASELKSQWDEFSKEELHDKEDESHVSIAGRLMTKRGKGKAGFAHVQDLTGQIQIYVRKDQIGEEDFDNLWKGADLGDIVGIEGVMFKTNTGELSVKAKTFTLLSKALRPLPDKFHGLQDIEQRYRQRYLDLITNQDSTQTFINRSKIIQEMRNYLNKQGFLEVETPMMHQIAGGAAARPFVTHHNALDATLYMRIAIELHLKRLIVGGLEKVYEIGRVFRNEGVSTRHNPEFTMIELYEAYADYHDIMDLTESMVRHIAQEVFGSAKVQYNEEEIDLESAWTRLHIVDAVKEATGVDFYQIKSDEEAIAAAKEHGIEITNNMKYGHILNEFFEQKVEETLIQPTFIYGHPIEISPLAKKNPEDPRFTDRFELFIVGREHANAFTELNDPIDQRERFEAQLVEKAQGNDEAHEMDEDYIEALEYGMPPTGGLGIGIDRLVMLLTDSPSIRDVLLFPYMRQK</sequence>
<comment type="catalytic activity">
    <reaction evidence="1">
        <text>tRNA(Lys) + L-lysine + ATP = L-lysyl-tRNA(Lys) + AMP + diphosphate</text>
        <dbReference type="Rhea" id="RHEA:20792"/>
        <dbReference type="Rhea" id="RHEA-COMP:9696"/>
        <dbReference type="Rhea" id="RHEA-COMP:9697"/>
        <dbReference type="ChEBI" id="CHEBI:30616"/>
        <dbReference type="ChEBI" id="CHEBI:32551"/>
        <dbReference type="ChEBI" id="CHEBI:33019"/>
        <dbReference type="ChEBI" id="CHEBI:78442"/>
        <dbReference type="ChEBI" id="CHEBI:78529"/>
        <dbReference type="ChEBI" id="CHEBI:456215"/>
        <dbReference type="EC" id="6.1.1.6"/>
    </reaction>
</comment>
<comment type="cofactor">
    <cofactor evidence="1">
        <name>Mg(2+)</name>
        <dbReference type="ChEBI" id="CHEBI:18420"/>
    </cofactor>
    <text evidence="1">Binds 3 Mg(2+) ions per subunit.</text>
</comment>
<comment type="subunit">
    <text evidence="1">Homodimer.</text>
</comment>
<comment type="subcellular location">
    <subcellularLocation>
        <location evidence="1">Cytoplasm</location>
    </subcellularLocation>
</comment>
<comment type="similarity">
    <text evidence="1">Belongs to the class-II aminoacyl-tRNA synthetase family.</text>
</comment>
<keyword id="KW-0030">Aminoacyl-tRNA synthetase</keyword>
<keyword id="KW-0067">ATP-binding</keyword>
<keyword id="KW-0963">Cytoplasm</keyword>
<keyword id="KW-0436">Ligase</keyword>
<keyword id="KW-0460">Magnesium</keyword>
<keyword id="KW-0479">Metal-binding</keyword>
<keyword id="KW-0547">Nucleotide-binding</keyword>
<keyword id="KW-0648">Protein biosynthesis</keyword>
<proteinExistence type="inferred from homology"/>
<gene>
    <name evidence="1" type="primary">lysS</name>
    <name type="ordered locus">SH2493</name>
</gene>
<name>SYK_STAHJ</name>
<protein>
    <recommendedName>
        <fullName evidence="1">Lysine--tRNA ligase</fullName>
        <ecNumber evidence="1">6.1.1.6</ecNumber>
    </recommendedName>
    <alternativeName>
        <fullName evidence="1">Lysyl-tRNA synthetase</fullName>
        <shortName evidence="1">LysRS</shortName>
    </alternativeName>
</protein>
<dbReference type="EC" id="6.1.1.6" evidence="1"/>
<dbReference type="EMBL" id="AP006716">
    <property type="protein sequence ID" value="BAE05802.1"/>
    <property type="molecule type" value="Genomic_DNA"/>
</dbReference>
<dbReference type="RefSeq" id="WP_011276745.1">
    <property type="nucleotide sequence ID" value="NC_007168.1"/>
</dbReference>
<dbReference type="SMR" id="Q4L3H5"/>
<dbReference type="GeneID" id="93781723"/>
<dbReference type="KEGG" id="sha:SH2493"/>
<dbReference type="eggNOG" id="COG1190">
    <property type="taxonomic scope" value="Bacteria"/>
</dbReference>
<dbReference type="HOGENOM" id="CLU_008255_6_0_9"/>
<dbReference type="OrthoDB" id="9801152at2"/>
<dbReference type="Proteomes" id="UP000000543">
    <property type="component" value="Chromosome"/>
</dbReference>
<dbReference type="GO" id="GO:0005829">
    <property type="term" value="C:cytosol"/>
    <property type="evidence" value="ECO:0007669"/>
    <property type="project" value="TreeGrafter"/>
</dbReference>
<dbReference type="GO" id="GO:0005524">
    <property type="term" value="F:ATP binding"/>
    <property type="evidence" value="ECO:0007669"/>
    <property type="project" value="UniProtKB-UniRule"/>
</dbReference>
<dbReference type="GO" id="GO:0140096">
    <property type="term" value="F:catalytic activity, acting on a protein"/>
    <property type="evidence" value="ECO:0007669"/>
    <property type="project" value="UniProtKB-ARBA"/>
</dbReference>
<dbReference type="GO" id="GO:0004824">
    <property type="term" value="F:lysine-tRNA ligase activity"/>
    <property type="evidence" value="ECO:0007669"/>
    <property type="project" value="UniProtKB-UniRule"/>
</dbReference>
<dbReference type="GO" id="GO:0000287">
    <property type="term" value="F:magnesium ion binding"/>
    <property type="evidence" value="ECO:0007669"/>
    <property type="project" value="UniProtKB-UniRule"/>
</dbReference>
<dbReference type="GO" id="GO:0016740">
    <property type="term" value="F:transferase activity"/>
    <property type="evidence" value="ECO:0007669"/>
    <property type="project" value="UniProtKB-ARBA"/>
</dbReference>
<dbReference type="GO" id="GO:0000049">
    <property type="term" value="F:tRNA binding"/>
    <property type="evidence" value="ECO:0007669"/>
    <property type="project" value="TreeGrafter"/>
</dbReference>
<dbReference type="GO" id="GO:0006430">
    <property type="term" value="P:lysyl-tRNA aminoacylation"/>
    <property type="evidence" value="ECO:0007669"/>
    <property type="project" value="UniProtKB-UniRule"/>
</dbReference>
<dbReference type="CDD" id="cd00775">
    <property type="entry name" value="LysRS_core"/>
    <property type="match status" value="1"/>
</dbReference>
<dbReference type="CDD" id="cd04322">
    <property type="entry name" value="LysRS_N"/>
    <property type="match status" value="1"/>
</dbReference>
<dbReference type="FunFam" id="2.40.50.140:FF:000024">
    <property type="entry name" value="Lysine--tRNA ligase"/>
    <property type="match status" value="1"/>
</dbReference>
<dbReference type="FunFam" id="3.30.930.10:FF:000001">
    <property type="entry name" value="Lysine--tRNA ligase"/>
    <property type="match status" value="1"/>
</dbReference>
<dbReference type="Gene3D" id="3.30.930.10">
    <property type="entry name" value="Bira Bifunctional Protein, Domain 2"/>
    <property type="match status" value="1"/>
</dbReference>
<dbReference type="Gene3D" id="2.40.50.140">
    <property type="entry name" value="Nucleic acid-binding proteins"/>
    <property type="match status" value="1"/>
</dbReference>
<dbReference type="HAMAP" id="MF_00252">
    <property type="entry name" value="Lys_tRNA_synth_class2"/>
    <property type="match status" value="1"/>
</dbReference>
<dbReference type="InterPro" id="IPR004364">
    <property type="entry name" value="Aa-tRNA-synt_II"/>
</dbReference>
<dbReference type="InterPro" id="IPR006195">
    <property type="entry name" value="aa-tRNA-synth_II"/>
</dbReference>
<dbReference type="InterPro" id="IPR045864">
    <property type="entry name" value="aa-tRNA-synth_II/BPL/LPL"/>
</dbReference>
<dbReference type="InterPro" id="IPR002313">
    <property type="entry name" value="Lys-tRNA-ligase_II"/>
</dbReference>
<dbReference type="InterPro" id="IPR034762">
    <property type="entry name" value="Lys-tRNA-ligase_II_bac/euk"/>
</dbReference>
<dbReference type="InterPro" id="IPR044136">
    <property type="entry name" value="Lys-tRNA-ligase_II_N"/>
</dbReference>
<dbReference type="InterPro" id="IPR018149">
    <property type="entry name" value="Lys-tRNA-synth_II_C"/>
</dbReference>
<dbReference type="InterPro" id="IPR012340">
    <property type="entry name" value="NA-bd_OB-fold"/>
</dbReference>
<dbReference type="InterPro" id="IPR004365">
    <property type="entry name" value="NA-bd_OB_tRNA"/>
</dbReference>
<dbReference type="NCBIfam" id="TIGR00499">
    <property type="entry name" value="lysS_bact"/>
    <property type="match status" value="1"/>
</dbReference>
<dbReference type="NCBIfam" id="NF001756">
    <property type="entry name" value="PRK00484.1"/>
    <property type="match status" value="1"/>
</dbReference>
<dbReference type="PANTHER" id="PTHR42918:SF15">
    <property type="entry name" value="LYSINE--TRNA LIGASE, CHLOROPLASTIC_MITOCHONDRIAL"/>
    <property type="match status" value="1"/>
</dbReference>
<dbReference type="PANTHER" id="PTHR42918">
    <property type="entry name" value="LYSYL-TRNA SYNTHETASE"/>
    <property type="match status" value="1"/>
</dbReference>
<dbReference type="Pfam" id="PF00152">
    <property type="entry name" value="tRNA-synt_2"/>
    <property type="match status" value="1"/>
</dbReference>
<dbReference type="Pfam" id="PF01336">
    <property type="entry name" value="tRNA_anti-codon"/>
    <property type="match status" value="1"/>
</dbReference>
<dbReference type="PIRSF" id="PIRSF039101">
    <property type="entry name" value="LysRS2"/>
    <property type="match status" value="1"/>
</dbReference>
<dbReference type="PRINTS" id="PR00982">
    <property type="entry name" value="TRNASYNTHLYS"/>
</dbReference>
<dbReference type="SUPFAM" id="SSF55681">
    <property type="entry name" value="Class II aaRS and biotin synthetases"/>
    <property type="match status" value="1"/>
</dbReference>
<dbReference type="SUPFAM" id="SSF50249">
    <property type="entry name" value="Nucleic acid-binding proteins"/>
    <property type="match status" value="1"/>
</dbReference>
<dbReference type="PROSITE" id="PS50862">
    <property type="entry name" value="AA_TRNA_LIGASE_II"/>
    <property type="match status" value="1"/>
</dbReference>
<organism>
    <name type="scientific">Staphylococcus haemolyticus (strain JCSC1435)</name>
    <dbReference type="NCBI Taxonomy" id="279808"/>
    <lineage>
        <taxon>Bacteria</taxon>
        <taxon>Bacillati</taxon>
        <taxon>Bacillota</taxon>
        <taxon>Bacilli</taxon>
        <taxon>Bacillales</taxon>
        <taxon>Staphylococcaceae</taxon>
        <taxon>Staphylococcus</taxon>
    </lineage>
</organism>
<evidence type="ECO:0000255" key="1">
    <source>
        <dbReference type="HAMAP-Rule" id="MF_00252"/>
    </source>
</evidence>
<feature type="chain" id="PRO_1000012943" description="Lysine--tRNA ligase">
    <location>
        <begin position="1"/>
        <end position="496"/>
    </location>
</feature>
<feature type="binding site" evidence="1">
    <location>
        <position position="407"/>
    </location>
    <ligand>
        <name>Mg(2+)</name>
        <dbReference type="ChEBI" id="CHEBI:18420"/>
        <label>1</label>
    </ligand>
</feature>
<feature type="binding site" evidence="1">
    <location>
        <position position="414"/>
    </location>
    <ligand>
        <name>Mg(2+)</name>
        <dbReference type="ChEBI" id="CHEBI:18420"/>
        <label>1</label>
    </ligand>
</feature>
<feature type="binding site" evidence="1">
    <location>
        <position position="414"/>
    </location>
    <ligand>
        <name>Mg(2+)</name>
        <dbReference type="ChEBI" id="CHEBI:18420"/>
        <label>2</label>
    </ligand>
</feature>
<reference key="1">
    <citation type="journal article" date="2005" name="J. Bacteriol.">
        <title>Whole-genome sequencing of Staphylococcus haemolyticus uncovers the extreme plasticity of its genome and the evolution of human-colonizing staphylococcal species.</title>
        <authorList>
            <person name="Takeuchi F."/>
            <person name="Watanabe S."/>
            <person name="Baba T."/>
            <person name="Yuzawa H."/>
            <person name="Ito T."/>
            <person name="Morimoto Y."/>
            <person name="Kuroda M."/>
            <person name="Cui L."/>
            <person name="Takahashi M."/>
            <person name="Ankai A."/>
            <person name="Baba S."/>
            <person name="Fukui S."/>
            <person name="Lee J.C."/>
            <person name="Hiramatsu K."/>
        </authorList>
    </citation>
    <scope>NUCLEOTIDE SEQUENCE [LARGE SCALE GENOMIC DNA]</scope>
    <source>
        <strain>JCSC1435</strain>
    </source>
</reference>